<proteinExistence type="inferred from homology"/>
<dbReference type="EC" id="7.3.2.2" evidence="1"/>
<dbReference type="EMBL" id="CP000250">
    <property type="protein sequence ID" value="ABD06635.1"/>
    <property type="status" value="ALT_INIT"/>
    <property type="molecule type" value="Genomic_DNA"/>
</dbReference>
<dbReference type="RefSeq" id="WP_041798653.1">
    <property type="nucleotide sequence ID" value="NC_007778.1"/>
</dbReference>
<dbReference type="SMR" id="Q2IYS5"/>
<dbReference type="STRING" id="316058.RPB_1927"/>
<dbReference type="KEGG" id="rpb:RPB_1927"/>
<dbReference type="eggNOG" id="COG3638">
    <property type="taxonomic scope" value="Bacteria"/>
</dbReference>
<dbReference type="HOGENOM" id="CLU_000604_1_22_5"/>
<dbReference type="OrthoDB" id="9802264at2"/>
<dbReference type="Proteomes" id="UP000008809">
    <property type="component" value="Chromosome"/>
</dbReference>
<dbReference type="GO" id="GO:0005886">
    <property type="term" value="C:plasma membrane"/>
    <property type="evidence" value="ECO:0007669"/>
    <property type="project" value="UniProtKB-SubCell"/>
</dbReference>
<dbReference type="GO" id="GO:0015416">
    <property type="term" value="F:ABC-type phosphonate transporter activity"/>
    <property type="evidence" value="ECO:0007669"/>
    <property type="project" value="UniProtKB-EC"/>
</dbReference>
<dbReference type="GO" id="GO:0005524">
    <property type="term" value="F:ATP binding"/>
    <property type="evidence" value="ECO:0007669"/>
    <property type="project" value="UniProtKB-KW"/>
</dbReference>
<dbReference type="GO" id="GO:0016887">
    <property type="term" value="F:ATP hydrolysis activity"/>
    <property type="evidence" value="ECO:0007669"/>
    <property type="project" value="InterPro"/>
</dbReference>
<dbReference type="CDD" id="cd03256">
    <property type="entry name" value="ABC_PhnC_transporter"/>
    <property type="match status" value="1"/>
</dbReference>
<dbReference type="Gene3D" id="3.40.50.300">
    <property type="entry name" value="P-loop containing nucleotide triphosphate hydrolases"/>
    <property type="match status" value="1"/>
</dbReference>
<dbReference type="InterPro" id="IPR003593">
    <property type="entry name" value="AAA+_ATPase"/>
</dbReference>
<dbReference type="InterPro" id="IPR003439">
    <property type="entry name" value="ABC_transporter-like_ATP-bd"/>
</dbReference>
<dbReference type="InterPro" id="IPR017871">
    <property type="entry name" value="ABC_transporter-like_CS"/>
</dbReference>
<dbReference type="InterPro" id="IPR012693">
    <property type="entry name" value="ABC_transpr_PhnC"/>
</dbReference>
<dbReference type="InterPro" id="IPR050086">
    <property type="entry name" value="MetN_ABC_transporter-like"/>
</dbReference>
<dbReference type="InterPro" id="IPR027417">
    <property type="entry name" value="P-loop_NTPase"/>
</dbReference>
<dbReference type="NCBIfam" id="TIGR02315">
    <property type="entry name" value="ABC_phnC"/>
    <property type="match status" value="1"/>
</dbReference>
<dbReference type="PANTHER" id="PTHR43166">
    <property type="entry name" value="AMINO ACID IMPORT ATP-BINDING PROTEIN"/>
    <property type="match status" value="1"/>
</dbReference>
<dbReference type="PANTHER" id="PTHR43166:SF6">
    <property type="entry name" value="PHOSPHONATES IMPORT ATP-BINDING PROTEIN PHNC"/>
    <property type="match status" value="1"/>
</dbReference>
<dbReference type="Pfam" id="PF00005">
    <property type="entry name" value="ABC_tran"/>
    <property type="match status" value="1"/>
</dbReference>
<dbReference type="SMART" id="SM00382">
    <property type="entry name" value="AAA"/>
    <property type="match status" value="1"/>
</dbReference>
<dbReference type="SUPFAM" id="SSF52540">
    <property type="entry name" value="P-loop containing nucleoside triphosphate hydrolases"/>
    <property type="match status" value="1"/>
</dbReference>
<dbReference type="PROSITE" id="PS00211">
    <property type="entry name" value="ABC_TRANSPORTER_1"/>
    <property type="match status" value="1"/>
</dbReference>
<dbReference type="PROSITE" id="PS50893">
    <property type="entry name" value="ABC_TRANSPORTER_2"/>
    <property type="match status" value="1"/>
</dbReference>
<dbReference type="PROSITE" id="PS51249">
    <property type="entry name" value="PHNC"/>
    <property type="match status" value="1"/>
</dbReference>
<keyword id="KW-0067">ATP-binding</keyword>
<keyword id="KW-0997">Cell inner membrane</keyword>
<keyword id="KW-1003">Cell membrane</keyword>
<keyword id="KW-0472">Membrane</keyword>
<keyword id="KW-0547">Nucleotide-binding</keyword>
<keyword id="KW-0918">Phosphonate transport</keyword>
<keyword id="KW-1185">Reference proteome</keyword>
<keyword id="KW-1278">Translocase</keyword>
<keyword id="KW-0813">Transport</keyword>
<evidence type="ECO:0000255" key="1">
    <source>
        <dbReference type="HAMAP-Rule" id="MF_01713"/>
    </source>
</evidence>
<evidence type="ECO:0000256" key="2">
    <source>
        <dbReference type="SAM" id="MobiDB-lite"/>
    </source>
</evidence>
<evidence type="ECO:0000305" key="3"/>
<comment type="function">
    <text evidence="1">Part of the ABC transporter complex PhnCDE involved in phosphonates import. Responsible for energy coupling to the transport system.</text>
</comment>
<comment type="catalytic activity">
    <reaction evidence="1">
        <text>phosphonate(out) + ATP + H2O = phosphonate(in) + ADP + phosphate + H(+)</text>
        <dbReference type="Rhea" id="RHEA:18065"/>
        <dbReference type="ChEBI" id="CHEBI:15377"/>
        <dbReference type="ChEBI" id="CHEBI:15378"/>
        <dbReference type="ChEBI" id="CHEBI:16215"/>
        <dbReference type="ChEBI" id="CHEBI:30616"/>
        <dbReference type="ChEBI" id="CHEBI:43474"/>
        <dbReference type="ChEBI" id="CHEBI:456216"/>
        <dbReference type="EC" id="7.3.2.2"/>
    </reaction>
</comment>
<comment type="subunit">
    <text evidence="1">The complex is composed of two ATP-binding proteins (PhnC), two transmembrane proteins (PhnE) and a solute-binding protein (PhnD).</text>
</comment>
<comment type="subcellular location">
    <subcellularLocation>
        <location evidence="1">Cell inner membrane</location>
        <topology evidence="1">Peripheral membrane protein</topology>
    </subcellularLocation>
</comment>
<comment type="similarity">
    <text evidence="1">Belongs to the ABC transporter superfamily. Phosphonates importer (TC 3.A.1.9.1) family.</text>
</comment>
<comment type="sequence caution" evidence="3">
    <conflict type="erroneous initiation">
        <sequence resource="EMBL-CDS" id="ABD06635"/>
    </conflict>
</comment>
<feature type="chain" id="PRO_0000274746" description="Phosphonates import ATP-binding protein PhnC 1">
    <location>
        <begin position="1"/>
        <end position="280"/>
    </location>
</feature>
<feature type="domain" description="ABC transporter" evidence="1">
    <location>
        <begin position="2"/>
        <end position="246"/>
    </location>
</feature>
<feature type="region of interest" description="Disordered" evidence="2">
    <location>
        <begin position="247"/>
        <end position="266"/>
    </location>
</feature>
<feature type="binding site" evidence="1">
    <location>
        <begin position="35"/>
        <end position="42"/>
    </location>
    <ligand>
        <name>ATP</name>
        <dbReference type="ChEBI" id="CHEBI:30616"/>
    </ligand>
</feature>
<organism>
    <name type="scientific">Rhodopseudomonas palustris (strain HaA2)</name>
    <dbReference type="NCBI Taxonomy" id="316058"/>
    <lineage>
        <taxon>Bacteria</taxon>
        <taxon>Pseudomonadati</taxon>
        <taxon>Pseudomonadota</taxon>
        <taxon>Alphaproteobacteria</taxon>
        <taxon>Hyphomicrobiales</taxon>
        <taxon>Nitrobacteraceae</taxon>
        <taxon>Rhodopseudomonas</taxon>
    </lineage>
</organism>
<sequence>MLRIENLDKRYKTGDRALKDVSLSIGAGDIVGLIGPSGAGKSTLIRCVNRLVQPTGGSIRLGDTELTRLGGTELRKARRRMGMIFQEFALIERLTVMENVLSGRLGYVGFWASWFRRFPQADVQRAFALLARVGLSEQVDKRADALSGGQRQRVGIARALAQDPELLLIDEPTASLDPKTSRQVMRLITELCAERGLAAIVNIHDVALAQLFLPRIVGLRAGEVVYDGPASGLTPDVLTRIYGEEDWSKTSDEDADSVDAPPRAADLPASLKLDPALARL</sequence>
<gene>
    <name evidence="1" type="primary">phnC1</name>
    <name type="ordered locus">RPB_1927</name>
</gene>
<name>PHNC1_RHOP2</name>
<reference key="1">
    <citation type="submission" date="2006-01" db="EMBL/GenBank/DDBJ databases">
        <title>Complete sequence of Rhodopseudomonas palustris HaA2.</title>
        <authorList>
            <consortium name="US DOE Joint Genome Institute"/>
            <person name="Copeland A."/>
            <person name="Lucas S."/>
            <person name="Lapidus A."/>
            <person name="Barry K."/>
            <person name="Detter J.C."/>
            <person name="Glavina T."/>
            <person name="Hammon N."/>
            <person name="Israni S."/>
            <person name="Pitluck S."/>
            <person name="Chain P."/>
            <person name="Malfatti S."/>
            <person name="Shin M."/>
            <person name="Vergez L."/>
            <person name="Schmutz J."/>
            <person name="Larimer F."/>
            <person name="Land M."/>
            <person name="Hauser L."/>
            <person name="Pelletier D.A."/>
            <person name="Kyrpides N."/>
            <person name="Anderson I."/>
            <person name="Oda Y."/>
            <person name="Harwood C.S."/>
            <person name="Richardson P."/>
        </authorList>
    </citation>
    <scope>NUCLEOTIDE SEQUENCE [LARGE SCALE GENOMIC DNA]</scope>
    <source>
        <strain>HaA2</strain>
    </source>
</reference>
<protein>
    <recommendedName>
        <fullName evidence="1">Phosphonates import ATP-binding protein PhnC 1</fullName>
        <ecNumber evidence="1">7.3.2.2</ecNumber>
    </recommendedName>
</protein>
<accession>Q2IYS5</accession>